<gene>
    <name evidence="1" type="primary">lon</name>
    <name type="ordered locus">SMGWSS_129</name>
</gene>
<feature type="chain" id="PRO_0000396603" description="Lon protease">
    <location>
        <begin position="1"/>
        <end position="855"/>
    </location>
</feature>
<feature type="domain" description="Lon N-terminal" evidence="3">
    <location>
        <begin position="45"/>
        <end position="288"/>
    </location>
</feature>
<feature type="domain" description="Lon proteolytic" evidence="2">
    <location>
        <begin position="674"/>
        <end position="855"/>
    </location>
</feature>
<feature type="active site" evidence="1">
    <location>
        <position position="761"/>
    </location>
</feature>
<feature type="active site" evidence="1">
    <location>
        <position position="804"/>
    </location>
</feature>
<feature type="binding site" evidence="1">
    <location>
        <begin position="439"/>
        <end position="446"/>
    </location>
    <ligand>
        <name>ATP</name>
        <dbReference type="ChEBI" id="CHEBI:30616"/>
    </ligand>
</feature>
<organism>
    <name type="scientific">Karelsulcia muelleri (strain GWSS)</name>
    <name type="common">Sulcia muelleri</name>
    <dbReference type="NCBI Taxonomy" id="444179"/>
    <lineage>
        <taxon>Bacteria</taxon>
        <taxon>Pseudomonadati</taxon>
        <taxon>Bacteroidota</taxon>
        <taxon>Flavobacteriia</taxon>
        <taxon>Flavobacteriales</taxon>
        <taxon>Candidatus Karelsulcia</taxon>
    </lineage>
</organism>
<sequence>MLLHETESEYDSKSKKNNYSYYESSDFKPLIEKYNRIKYSVTEYIYLLTVKNVVLFPDVVIPITAVKQKSINLFKSAYYTYKKIGILTKKYFNTTFSIAKLNIQTFNIYSFNKFNKINKFNKINKFNKINKFNKINKFNKINKFNKTNNIYYIGTVAKILKLLIMPDGNTTVILQGISRFKIIKLIQVYPYFKAEIIYLKDEKPQKKDKEYLILIDSIKEIAIKIIQDNYKIPSESSFAISNIESKSFLINFVAYNLNIEIKNKQILLEYDFLKQRAIETFRFLNIEYEKIKLKNDIQYRVRYDIDQQQKEYFLNQQIKALQEELGDFSYEKEVEVLRIKSYKKNWSKEAQNQFDRELSKLKRTNPQMPEYTILRNYLDLMLDLPWKKYSQDNYDLYRAQKILDKDHFGIDKVKERIIEYLSVLKLKGDLRSPILCFYGPPGVGKTSLGRSIASALNRKYVRISLGGLNDEAEIRGHRKTYIGAMPGRVLQSIKKAGTSNPVFVLDEIDKMGLGSQGNPSSAMLEVLDPEQNKEFYDNFLEMGYDLSKVIFIATANSLYTINIALLDRMEIIDMNGYTVEEKIEISKKHLIPKQLKENGLKSKDIILGVKQIEKIIESYTRESGVRSLEKNISKIVRYAAKNIAMNKKYLKRINMSKIEEVLGPPNDPEKYELIQVPGVVTGLAWTIVGGEIIYIESTLLKGRGNLSITGNVGEVMKESATIAFKYIKAHNYEFGIDEKMFELYNIHIHAPEGGIHKDGPSAGITMLTSIISSFLKKKIRPYLAMTGEITLRGKVLPVGGIKEKILAAKRANIKEIILSKANKKDIDDIKKVYLKGLKFHFVSKMNEVIDLSIIK</sequence>
<evidence type="ECO:0000255" key="1">
    <source>
        <dbReference type="HAMAP-Rule" id="MF_01973"/>
    </source>
</evidence>
<evidence type="ECO:0000255" key="2">
    <source>
        <dbReference type="PROSITE-ProRule" id="PRU01122"/>
    </source>
</evidence>
<evidence type="ECO:0000255" key="3">
    <source>
        <dbReference type="PROSITE-ProRule" id="PRU01123"/>
    </source>
</evidence>
<accession>A8Z5Z0</accession>
<keyword id="KW-0067">ATP-binding</keyword>
<keyword id="KW-0963">Cytoplasm</keyword>
<keyword id="KW-0378">Hydrolase</keyword>
<keyword id="KW-0547">Nucleotide-binding</keyword>
<keyword id="KW-0645">Protease</keyword>
<keyword id="KW-0720">Serine protease</keyword>
<keyword id="KW-0346">Stress response</keyword>
<protein>
    <recommendedName>
        <fullName evidence="1">Lon protease</fullName>
        <ecNumber evidence="1">3.4.21.53</ecNumber>
    </recommendedName>
    <alternativeName>
        <fullName evidence="1">ATP-dependent protease La</fullName>
    </alternativeName>
</protein>
<reference key="1">
    <citation type="journal article" date="2007" name="Proc. Natl. Acad. Sci. U.S.A.">
        <title>Parallel genomic evolution and metabolic interdependence in an ancient symbiosis.</title>
        <authorList>
            <person name="McCutcheon J.P."/>
            <person name="Moran N.A."/>
        </authorList>
    </citation>
    <scope>NUCLEOTIDE SEQUENCE [LARGE SCALE GENOMIC DNA]</scope>
    <source>
        <strain>GWSS</strain>
    </source>
</reference>
<proteinExistence type="inferred from homology"/>
<dbReference type="EC" id="3.4.21.53" evidence="1"/>
<dbReference type="EMBL" id="CP000770">
    <property type="protein sequence ID" value="ABS30541.1"/>
    <property type="molecule type" value="Genomic_DNA"/>
</dbReference>
<dbReference type="SMR" id="A8Z5Z0"/>
<dbReference type="STRING" id="444179.SMGWSS_129"/>
<dbReference type="KEGG" id="smg:SMGWSS_129"/>
<dbReference type="HOGENOM" id="CLU_004109_4_3_10"/>
<dbReference type="Proteomes" id="UP000000781">
    <property type="component" value="Chromosome"/>
</dbReference>
<dbReference type="GO" id="GO:0005737">
    <property type="term" value="C:cytoplasm"/>
    <property type="evidence" value="ECO:0007669"/>
    <property type="project" value="UniProtKB-SubCell"/>
</dbReference>
<dbReference type="GO" id="GO:0005524">
    <property type="term" value="F:ATP binding"/>
    <property type="evidence" value="ECO:0007669"/>
    <property type="project" value="UniProtKB-UniRule"/>
</dbReference>
<dbReference type="GO" id="GO:0016887">
    <property type="term" value="F:ATP hydrolysis activity"/>
    <property type="evidence" value="ECO:0007669"/>
    <property type="project" value="UniProtKB-UniRule"/>
</dbReference>
<dbReference type="GO" id="GO:0004176">
    <property type="term" value="F:ATP-dependent peptidase activity"/>
    <property type="evidence" value="ECO:0007669"/>
    <property type="project" value="UniProtKB-UniRule"/>
</dbReference>
<dbReference type="GO" id="GO:0043565">
    <property type="term" value="F:sequence-specific DNA binding"/>
    <property type="evidence" value="ECO:0007669"/>
    <property type="project" value="UniProtKB-UniRule"/>
</dbReference>
<dbReference type="GO" id="GO:0004252">
    <property type="term" value="F:serine-type endopeptidase activity"/>
    <property type="evidence" value="ECO:0007669"/>
    <property type="project" value="UniProtKB-UniRule"/>
</dbReference>
<dbReference type="GO" id="GO:0034605">
    <property type="term" value="P:cellular response to heat"/>
    <property type="evidence" value="ECO:0007669"/>
    <property type="project" value="UniProtKB-UniRule"/>
</dbReference>
<dbReference type="GO" id="GO:0006515">
    <property type="term" value="P:protein quality control for misfolded or incompletely synthesized proteins"/>
    <property type="evidence" value="ECO:0007669"/>
    <property type="project" value="UniProtKB-UniRule"/>
</dbReference>
<dbReference type="CDD" id="cd19500">
    <property type="entry name" value="RecA-like_Lon"/>
    <property type="match status" value="1"/>
</dbReference>
<dbReference type="FunFam" id="3.40.50.300:FF:000021">
    <property type="entry name" value="Lon protease homolog"/>
    <property type="match status" value="1"/>
</dbReference>
<dbReference type="Gene3D" id="1.10.8.60">
    <property type="match status" value="1"/>
</dbReference>
<dbReference type="Gene3D" id="1.20.5.5270">
    <property type="match status" value="1"/>
</dbReference>
<dbReference type="Gene3D" id="1.20.58.1480">
    <property type="match status" value="1"/>
</dbReference>
<dbReference type="Gene3D" id="3.30.230.10">
    <property type="match status" value="1"/>
</dbReference>
<dbReference type="Gene3D" id="2.30.130.40">
    <property type="entry name" value="LON domain-like"/>
    <property type="match status" value="1"/>
</dbReference>
<dbReference type="Gene3D" id="3.40.50.300">
    <property type="entry name" value="P-loop containing nucleotide triphosphate hydrolases"/>
    <property type="match status" value="1"/>
</dbReference>
<dbReference type="HAMAP" id="MF_01973">
    <property type="entry name" value="lon_bact"/>
    <property type="match status" value="1"/>
</dbReference>
<dbReference type="InterPro" id="IPR003593">
    <property type="entry name" value="AAA+_ATPase"/>
</dbReference>
<dbReference type="InterPro" id="IPR003959">
    <property type="entry name" value="ATPase_AAA_core"/>
</dbReference>
<dbReference type="InterPro" id="IPR027543">
    <property type="entry name" value="Lon_bac"/>
</dbReference>
<dbReference type="InterPro" id="IPR004815">
    <property type="entry name" value="Lon_bac/euk-typ"/>
</dbReference>
<dbReference type="InterPro" id="IPR054594">
    <property type="entry name" value="Lon_lid"/>
</dbReference>
<dbReference type="InterPro" id="IPR008269">
    <property type="entry name" value="Lon_proteolytic"/>
</dbReference>
<dbReference type="InterPro" id="IPR027065">
    <property type="entry name" value="Lon_Prtase"/>
</dbReference>
<dbReference type="InterPro" id="IPR003111">
    <property type="entry name" value="Lon_prtase_N"/>
</dbReference>
<dbReference type="InterPro" id="IPR046336">
    <property type="entry name" value="Lon_prtase_N_sf"/>
</dbReference>
<dbReference type="InterPro" id="IPR027417">
    <property type="entry name" value="P-loop_NTPase"/>
</dbReference>
<dbReference type="InterPro" id="IPR008268">
    <property type="entry name" value="Peptidase_S16_AS"/>
</dbReference>
<dbReference type="InterPro" id="IPR015947">
    <property type="entry name" value="PUA-like_sf"/>
</dbReference>
<dbReference type="InterPro" id="IPR020568">
    <property type="entry name" value="Ribosomal_Su5_D2-typ_SF"/>
</dbReference>
<dbReference type="InterPro" id="IPR014721">
    <property type="entry name" value="Ribsml_uS5_D2-typ_fold_subgr"/>
</dbReference>
<dbReference type="NCBIfam" id="TIGR00763">
    <property type="entry name" value="lon"/>
    <property type="match status" value="1"/>
</dbReference>
<dbReference type="PANTHER" id="PTHR10046">
    <property type="entry name" value="ATP DEPENDENT LON PROTEASE FAMILY MEMBER"/>
    <property type="match status" value="1"/>
</dbReference>
<dbReference type="Pfam" id="PF00004">
    <property type="entry name" value="AAA"/>
    <property type="match status" value="1"/>
</dbReference>
<dbReference type="Pfam" id="PF05362">
    <property type="entry name" value="Lon_C"/>
    <property type="match status" value="1"/>
</dbReference>
<dbReference type="Pfam" id="PF22667">
    <property type="entry name" value="Lon_lid"/>
    <property type="match status" value="1"/>
</dbReference>
<dbReference type="Pfam" id="PF02190">
    <property type="entry name" value="LON_substr_bdg"/>
    <property type="match status" value="1"/>
</dbReference>
<dbReference type="PIRSF" id="PIRSF001174">
    <property type="entry name" value="Lon_proteas"/>
    <property type="match status" value="1"/>
</dbReference>
<dbReference type="PRINTS" id="PR00830">
    <property type="entry name" value="ENDOLAPTASE"/>
</dbReference>
<dbReference type="SMART" id="SM00382">
    <property type="entry name" value="AAA"/>
    <property type="match status" value="1"/>
</dbReference>
<dbReference type="SMART" id="SM00464">
    <property type="entry name" value="LON"/>
    <property type="match status" value="1"/>
</dbReference>
<dbReference type="SUPFAM" id="SSF52540">
    <property type="entry name" value="P-loop containing nucleoside triphosphate hydrolases"/>
    <property type="match status" value="1"/>
</dbReference>
<dbReference type="SUPFAM" id="SSF88697">
    <property type="entry name" value="PUA domain-like"/>
    <property type="match status" value="1"/>
</dbReference>
<dbReference type="SUPFAM" id="SSF54211">
    <property type="entry name" value="Ribosomal protein S5 domain 2-like"/>
    <property type="match status" value="1"/>
</dbReference>
<dbReference type="PROSITE" id="PS51787">
    <property type="entry name" value="LON_N"/>
    <property type="match status" value="1"/>
</dbReference>
<dbReference type="PROSITE" id="PS51786">
    <property type="entry name" value="LON_PROTEOLYTIC"/>
    <property type="match status" value="1"/>
</dbReference>
<dbReference type="PROSITE" id="PS01046">
    <property type="entry name" value="LON_SER"/>
    <property type="match status" value="1"/>
</dbReference>
<comment type="function">
    <text evidence="1">ATP-dependent serine protease that mediates the selective degradation of mutant and abnormal proteins as well as certain short-lived regulatory proteins. Required for cellular homeostasis and for survival from DNA damage and developmental changes induced by stress. Degrades polypeptides processively to yield small peptide fragments that are 5 to 10 amino acids long. Binds to DNA in a double-stranded, site-specific manner.</text>
</comment>
<comment type="catalytic activity">
    <reaction evidence="1">
        <text>Hydrolysis of proteins in presence of ATP.</text>
        <dbReference type="EC" id="3.4.21.53"/>
    </reaction>
</comment>
<comment type="subunit">
    <text evidence="1">Homohexamer. Organized in a ring with a central cavity.</text>
</comment>
<comment type="subcellular location">
    <subcellularLocation>
        <location evidence="1">Cytoplasm</location>
    </subcellularLocation>
</comment>
<comment type="induction">
    <text evidence="1">By heat shock.</text>
</comment>
<comment type="similarity">
    <text evidence="1">Belongs to the peptidase S16 family.</text>
</comment>
<name>LON_KARMG</name>